<evidence type="ECO:0000255" key="1">
    <source>
        <dbReference type="HAMAP-Rule" id="MF_01379"/>
    </source>
</evidence>
<keyword id="KW-0007">Acetylation</keyword>
<keyword id="KW-0106">Calcium</keyword>
<keyword id="KW-0148">Chlorophyll</keyword>
<keyword id="KW-0150">Chloroplast</keyword>
<keyword id="KW-0157">Chromophore</keyword>
<keyword id="KW-0249">Electron transport</keyword>
<keyword id="KW-0359">Herbicide resistance</keyword>
<keyword id="KW-0408">Iron</keyword>
<keyword id="KW-0460">Magnesium</keyword>
<keyword id="KW-0464">Manganese</keyword>
<keyword id="KW-0472">Membrane</keyword>
<keyword id="KW-0479">Metal-binding</keyword>
<keyword id="KW-0560">Oxidoreductase</keyword>
<keyword id="KW-0597">Phosphoprotein</keyword>
<keyword id="KW-0602">Photosynthesis</keyword>
<keyword id="KW-0604">Photosystem II</keyword>
<keyword id="KW-0934">Plastid</keyword>
<keyword id="KW-1185">Reference proteome</keyword>
<keyword id="KW-0793">Thylakoid</keyword>
<keyword id="KW-0812">Transmembrane</keyword>
<keyword id="KW-1133">Transmembrane helix</keyword>
<keyword id="KW-0813">Transport</keyword>
<dbReference type="EC" id="1.10.3.9" evidence="1"/>
<dbReference type="EMBL" id="EF115542">
    <property type="protein sequence ID" value="ABK79476.1"/>
    <property type="molecule type" value="Genomic_DNA"/>
</dbReference>
<dbReference type="RefSeq" id="YP_899387.1">
    <property type="nucleotide sequence ID" value="NC_008602.1"/>
</dbReference>
<dbReference type="SMR" id="A1E9Q4"/>
<dbReference type="FunCoup" id="A1E9Q4">
    <property type="interactions" value="310"/>
</dbReference>
<dbReference type="STRING" id="4558.A1E9Q4"/>
<dbReference type="GeneID" id="4549136"/>
<dbReference type="KEGG" id="sbi:4549136"/>
<dbReference type="eggNOG" id="ENOG502QR09">
    <property type="taxonomic scope" value="Eukaryota"/>
</dbReference>
<dbReference type="InParanoid" id="A1E9Q4"/>
<dbReference type="OrthoDB" id="1911105at2759"/>
<dbReference type="Proteomes" id="UP000000768">
    <property type="component" value="Chloroplast"/>
</dbReference>
<dbReference type="GO" id="GO:0009535">
    <property type="term" value="C:chloroplast thylakoid membrane"/>
    <property type="evidence" value="ECO:0007669"/>
    <property type="project" value="UniProtKB-SubCell"/>
</dbReference>
<dbReference type="GO" id="GO:0009523">
    <property type="term" value="C:photosystem II"/>
    <property type="evidence" value="ECO:0000318"/>
    <property type="project" value="GO_Central"/>
</dbReference>
<dbReference type="GO" id="GO:0016168">
    <property type="term" value="F:chlorophyll binding"/>
    <property type="evidence" value="ECO:0007669"/>
    <property type="project" value="UniProtKB-UniRule"/>
</dbReference>
<dbReference type="GO" id="GO:0045156">
    <property type="term" value="F:electron transporter, transferring electrons within the cyclic electron transport pathway of photosynthesis activity"/>
    <property type="evidence" value="ECO:0007669"/>
    <property type="project" value="InterPro"/>
</dbReference>
<dbReference type="GO" id="GO:0005506">
    <property type="term" value="F:iron ion binding"/>
    <property type="evidence" value="ECO:0007669"/>
    <property type="project" value="UniProtKB-UniRule"/>
</dbReference>
<dbReference type="GO" id="GO:0016682">
    <property type="term" value="F:oxidoreductase activity, acting on diphenols and related substances as donors, oxygen as acceptor"/>
    <property type="evidence" value="ECO:0007669"/>
    <property type="project" value="UniProtKB-UniRule"/>
</dbReference>
<dbReference type="GO" id="GO:0010242">
    <property type="term" value="F:oxygen evolving activity"/>
    <property type="evidence" value="ECO:0007669"/>
    <property type="project" value="UniProtKB-EC"/>
</dbReference>
<dbReference type="GO" id="GO:0009772">
    <property type="term" value="P:photosynthetic electron transport in photosystem II"/>
    <property type="evidence" value="ECO:0007669"/>
    <property type="project" value="InterPro"/>
</dbReference>
<dbReference type="GO" id="GO:0009635">
    <property type="term" value="P:response to herbicide"/>
    <property type="evidence" value="ECO:0007669"/>
    <property type="project" value="UniProtKB-KW"/>
</dbReference>
<dbReference type="CDD" id="cd09289">
    <property type="entry name" value="Photosystem-II_D1"/>
    <property type="match status" value="1"/>
</dbReference>
<dbReference type="FunFam" id="1.20.85.10:FF:000002">
    <property type="entry name" value="Photosystem II protein D1"/>
    <property type="match status" value="1"/>
</dbReference>
<dbReference type="Gene3D" id="1.20.85.10">
    <property type="entry name" value="Photosystem II protein D1-like"/>
    <property type="match status" value="1"/>
</dbReference>
<dbReference type="HAMAP" id="MF_01379">
    <property type="entry name" value="PSII_PsbA_D1"/>
    <property type="match status" value="1"/>
</dbReference>
<dbReference type="InterPro" id="IPR055266">
    <property type="entry name" value="D1/D2"/>
</dbReference>
<dbReference type="InterPro" id="IPR036854">
    <property type="entry name" value="Photo_II_D1/D2_sf"/>
</dbReference>
<dbReference type="InterPro" id="IPR000484">
    <property type="entry name" value="Photo_RC_L/M"/>
</dbReference>
<dbReference type="InterPro" id="IPR055265">
    <property type="entry name" value="Photo_RC_L/M_CS"/>
</dbReference>
<dbReference type="InterPro" id="IPR005867">
    <property type="entry name" value="PSII_D1"/>
</dbReference>
<dbReference type="NCBIfam" id="TIGR01151">
    <property type="entry name" value="psbA"/>
    <property type="match status" value="1"/>
</dbReference>
<dbReference type="PANTHER" id="PTHR33149">
    <property type="entry name" value="PHOTOSYSTEM II PROTEIN D1"/>
    <property type="match status" value="1"/>
</dbReference>
<dbReference type="PANTHER" id="PTHR33149:SF58">
    <property type="entry name" value="PHOTOSYSTEM II PROTEIN D1"/>
    <property type="match status" value="1"/>
</dbReference>
<dbReference type="Pfam" id="PF00124">
    <property type="entry name" value="Photo_RC"/>
    <property type="match status" value="1"/>
</dbReference>
<dbReference type="PRINTS" id="PR00256">
    <property type="entry name" value="REACTNCENTRE"/>
</dbReference>
<dbReference type="SUPFAM" id="SSF81483">
    <property type="entry name" value="Bacterial photosystem II reaction centre, L and M subunits"/>
    <property type="match status" value="1"/>
</dbReference>
<dbReference type="PROSITE" id="PS00244">
    <property type="entry name" value="REACTION_CENTER"/>
    <property type="match status" value="1"/>
</dbReference>
<comment type="function">
    <text evidence="1">Photosystem II (PSII) is a light-driven water:plastoquinone oxidoreductase that uses light energy to abstract electrons from H(2)O, generating O(2) and a proton gradient subsequently used for ATP formation. It consists of a core antenna complex that captures photons, and an electron transfer chain that converts photonic excitation into a charge separation. The D1/D2 (PsbA/PsbD) reaction center heterodimer binds P680, the primary electron donor of PSII as well as several subsequent electron acceptors.</text>
</comment>
<comment type="catalytic activity">
    <reaction evidence="1">
        <text>2 a plastoquinone + 4 hnu + 2 H2O = 2 a plastoquinol + O2</text>
        <dbReference type="Rhea" id="RHEA:36359"/>
        <dbReference type="Rhea" id="RHEA-COMP:9561"/>
        <dbReference type="Rhea" id="RHEA-COMP:9562"/>
        <dbReference type="ChEBI" id="CHEBI:15377"/>
        <dbReference type="ChEBI" id="CHEBI:15379"/>
        <dbReference type="ChEBI" id="CHEBI:17757"/>
        <dbReference type="ChEBI" id="CHEBI:30212"/>
        <dbReference type="ChEBI" id="CHEBI:62192"/>
        <dbReference type="EC" id="1.10.3.9"/>
    </reaction>
</comment>
<comment type="cofactor">
    <text evidence="1">The D1/D2 heterodimer binds P680, chlorophylls that are the primary electron donor of PSII, and subsequent electron acceptors. It shares a non-heme iron and each subunit binds pheophytin, quinone, additional chlorophylls, carotenoids and lipids. D1 provides most of the ligands for the Mn4-Ca-O5 cluster of the oxygen-evolving complex (OEC). There is also a Cl(-1) ion associated with D1 and D2, which is required for oxygen evolution. The PSII complex binds additional chlorophylls, carotenoids and specific lipids.</text>
</comment>
<comment type="subunit">
    <text evidence="1">PSII is composed of 1 copy each of membrane proteins PsbA, PsbB, PsbC, PsbD, PsbE, PsbF, PsbH, PsbI, PsbJ, PsbK, PsbL, PsbM, PsbT, PsbX, PsbY, PsbZ, Psb30/Ycf12, at least 3 peripheral proteins of the oxygen-evolving complex and a large number of cofactors. It forms dimeric complexes.</text>
</comment>
<comment type="subcellular location">
    <subcellularLocation>
        <location evidence="1">Plastid</location>
        <location evidence="1">Chloroplast thylakoid membrane</location>
        <topology evidence="1">Multi-pass membrane protein</topology>
    </subcellularLocation>
</comment>
<comment type="PTM">
    <text evidence="1">Tyr-161 forms a radical intermediate that is referred to as redox-active TyrZ, YZ or Y-Z.</text>
</comment>
<comment type="PTM">
    <text evidence="1">C-terminally processed by CTPA; processing is essential to allow assembly of the oxygen-evolving complex and thus photosynthetic growth.</text>
</comment>
<comment type="miscellaneous">
    <text evidence="1">2 of the reaction center chlorophylls (ChlD1 and ChlD2) are entirely coordinated by water.</text>
</comment>
<comment type="miscellaneous">
    <text evidence="1">Herbicides such as atrazine, BNT, diuron or ioxynil bind in the Q(B) binding site and block subsequent electron transfer.</text>
</comment>
<comment type="similarity">
    <text evidence="1">Belongs to the reaction center PufL/M/PsbA/D family.</text>
</comment>
<reference key="1">
    <citation type="journal article" date="2007" name="Theor. Appl. Genet.">
        <title>Complete chloroplast genome sequences of Hordeum vulgare, Sorghum bicolor and Agrostis stolonifera, and comparative analyses with other grass genomes.</title>
        <authorList>
            <person name="Saski C."/>
            <person name="Lee S.-B."/>
            <person name="Fjellheim S."/>
            <person name="Guda C."/>
            <person name="Jansen R.K."/>
            <person name="Luo H."/>
            <person name="Tomkins J."/>
            <person name="Rognli O.A."/>
            <person name="Daniell H."/>
            <person name="Clarke J.L."/>
        </authorList>
    </citation>
    <scope>NUCLEOTIDE SEQUENCE [LARGE SCALE GENOMIC DNA]</scope>
    <source>
        <strain>cv. BTx623</strain>
    </source>
</reference>
<organism>
    <name type="scientific">Sorghum bicolor</name>
    <name type="common">Sorghum</name>
    <name type="synonym">Sorghum vulgare</name>
    <dbReference type="NCBI Taxonomy" id="4558"/>
    <lineage>
        <taxon>Eukaryota</taxon>
        <taxon>Viridiplantae</taxon>
        <taxon>Streptophyta</taxon>
        <taxon>Embryophyta</taxon>
        <taxon>Tracheophyta</taxon>
        <taxon>Spermatophyta</taxon>
        <taxon>Magnoliopsida</taxon>
        <taxon>Liliopsida</taxon>
        <taxon>Poales</taxon>
        <taxon>Poaceae</taxon>
        <taxon>PACMAD clade</taxon>
        <taxon>Panicoideae</taxon>
        <taxon>Andropogonodae</taxon>
        <taxon>Andropogoneae</taxon>
        <taxon>Sorghinae</taxon>
        <taxon>Sorghum</taxon>
    </lineage>
</organism>
<feature type="initiator methionine" description="Removed" evidence="1">
    <location>
        <position position="1"/>
    </location>
</feature>
<feature type="chain" id="PRO_0000340070" description="Photosystem II protein D1" evidence="1">
    <location>
        <begin position="2"/>
        <end position="344"/>
    </location>
</feature>
<feature type="propeptide" id="PRO_0000340071" evidence="1">
    <location>
        <begin position="345"/>
        <end position="353"/>
    </location>
</feature>
<feature type="transmembrane region" description="Helical" evidence="1">
    <location>
        <begin position="29"/>
        <end position="46"/>
    </location>
</feature>
<feature type="transmembrane region" description="Helical" evidence="1">
    <location>
        <begin position="118"/>
        <end position="133"/>
    </location>
</feature>
<feature type="transmembrane region" description="Helical" evidence="1">
    <location>
        <begin position="142"/>
        <end position="156"/>
    </location>
</feature>
<feature type="transmembrane region" description="Helical" evidence="1">
    <location>
        <begin position="197"/>
        <end position="218"/>
    </location>
</feature>
<feature type="transmembrane region" description="Helical" evidence="1">
    <location>
        <begin position="274"/>
        <end position="288"/>
    </location>
</feature>
<feature type="binding site" description="axial binding residue" evidence="1">
    <location>
        <position position="118"/>
    </location>
    <ligand>
        <name>chlorophyll a</name>
        <dbReference type="ChEBI" id="CHEBI:58416"/>
        <label>ChlzD1</label>
    </ligand>
    <ligandPart>
        <name>Mg</name>
        <dbReference type="ChEBI" id="CHEBI:25107"/>
    </ligandPart>
</feature>
<feature type="binding site" evidence="1">
    <location>
        <position position="126"/>
    </location>
    <ligand>
        <name>pheophytin a</name>
        <dbReference type="ChEBI" id="CHEBI:136840"/>
        <label>D1</label>
    </ligand>
</feature>
<feature type="binding site" evidence="1">
    <location>
        <position position="170"/>
    </location>
    <ligand>
        <name>[CaMn4O5] cluster</name>
        <dbReference type="ChEBI" id="CHEBI:189552"/>
    </ligand>
</feature>
<feature type="binding site" evidence="1">
    <location>
        <position position="189"/>
    </location>
    <ligand>
        <name>[CaMn4O5] cluster</name>
        <dbReference type="ChEBI" id="CHEBI:189552"/>
    </ligand>
</feature>
<feature type="binding site" description="axial binding residue" evidence="1">
    <location>
        <position position="198"/>
    </location>
    <ligand>
        <name>chlorophyll a</name>
        <dbReference type="ChEBI" id="CHEBI:58416"/>
        <label>PD1</label>
    </ligand>
    <ligandPart>
        <name>Mg</name>
        <dbReference type="ChEBI" id="CHEBI:25107"/>
    </ligandPart>
</feature>
<feature type="binding site" evidence="1">
    <location>
        <position position="215"/>
    </location>
    <ligand>
        <name>a quinone</name>
        <dbReference type="ChEBI" id="CHEBI:132124"/>
        <label>B</label>
    </ligand>
</feature>
<feature type="binding site" evidence="1">
    <location>
        <position position="215"/>
    </location>
    <ligand>
        <name>Fe cation</name>
        <dbReference type="ChEBI" id="CHEBI:24875"/>
        <note>ligand shared with heterodimeric partner</note>
    </ligand>
</feature>
<feature type="binding site" evidence="1">
    <location>
        <begin position="264"/>
        <end position="265"/>
    </location>
    <ligand>
        <name>a quinone</name>
        <dbReference type="ChEBI" id="CHEBI:132124"/>
        <label>B</label>
    </ligand>
</feature>
<feature type="binding site" evidence="1">
    <location>
        <position position="272"/>
    </location>
    <ligand>
        <name>Fe cation</name>
        <dbReference type="ChEBI" id="CHEBI:24875"/>
        <note>ligand shared with heterodimeric partner</note>
    </ligand>
</feature>
<feature type="binding site" evidence="1">
    <location>
        <position position="332"/>
    </location>
    <ligand>
        <name>[CaMn4O5] cluster</name>
        <dbReference type="ChEBI" id="CHEBI:189552"/>
    </ligand>
</feature>
<feature type="binding site" evidence="1">
    <location>
        <position position="333"/>
    </location>
    <ligand>
        <name>[CaMn4O5] cluster</name>
        <dbReference type="ChEBI" id="CHEBI:189552"/>
    </ligand>
</feature>
<feature type="binding site" evidence="1">
    <location>
        <position position="342"/>
    </location>
    <ligand>
        <name>[CaMn4O5] cluster</name>
        <dbReference type="ChEBI" id="CHEBI:189552"/>
    </ligand>
</feature>
<feature type="binding site" evidence="1">
    <location>
        <position position="344"/>
    </location>
    <ligand>
        <name>[CaMn4O5] cluster</name>
        <dbReference type="ChEBI" id="CHEBI:189552"/>
    </ligand>
</feature>
<feature type="site" description="Tyrosine radical intermediate" evidence="1">
    <location>
        <position position="161"/>
    </location>
</feature>
<feature type="site" description="Stabilizes free radical intermediate" evidence="1">
    <location>
        <position position="190"/>
    </location>
</feature>
<feature type="site" description="Cleavage; by CTPA" evidence="1">
    <location>
        <begin position="344"/>
        <end position="345"/>
    </location>
</feature>
<feature type="modified residue" description="N-acetylthreonine" evidence="1">
    <location>
        <position position="2"/>
    </location>
</feature>
<feature type="modified residue" description="Phosphothreonine" evidence="1">
    <location>
        <position position="2"/>
    </location>
</feature>
<accession>A1E9Q4</accession>
<proteinExistence type="inferred from homology"/>
<protein>
    <recommendedName>
        <fullName evidence="1">Photosystem II protein D1</fullName>
        <shortName evidence="1">PSII D1 protein</shortName>
        <ecNumber evidence="1">1.10.3.9</ecNumber>
    </recommendedName>
    <alternativeName>
        <fullName evidence="1">Photosystem II Q(B) protein</fullName>
    </alternativeName>
</protein>
<sequence length="353" mass="38935">MTAILERRESTSLWGRFCNWITSTENRLYIGWFGVLMIPTLLTATSVFIIAFIAAPPVDIDGIREPVSGSLLYGNNIISGAIIPTSAAIGLHFYPIWEAASVDEWLYNGGPYELIVLHFLLGVACYMGREWELSFRLGMRPWIAVAYSAPVAAATAVFLIYPIGQGSFSDGMPLGISGTFNFMIVFQAEHNILMHPFHMLGVAGVFGGSLFSAMHGSLVTSSLIRETTENESANEGYKFGQEEETYNIVAAHGYFGRLIFQYASFNNSRSLHFFLAAWPVVGIWFTALGISTMAFNLNGFNFNQSVVDSQGRVINTWADIINRANLGMEVMHERNAHNFPLDLAALEVPSLNG</sequence>
<name>PSBA_SORBI</name>
<geneLocation type="chloroplast"/>
<gene>
    <name evidence="1" type="primary">psbA</name>
</gene>